<accession>B4T3R6</accession>
<evidence type="ECO:0000255" key="1">
    <source>
        <dbReference type="HAMAP-Rule" id="MF_00550"/>
    </source>
</evidence>
<dbReference type="EC" id="3.4.11.4" evidence="1"/>
<dbReference type="EMBL" id="CP001113">
    <property type="protein sequence ID" value="ACF64590.1"/>
    <property type="molecule type" value="Genomic_DNA"/>
</dbReference>
<dbReference type="RefSeq" id="WP_000359410.1">
    <property type="nucleotide sequence ID" value="NZ_CCMR01000003.1"/>
</dbReference>
<dbReference type="SMR" id="B4T3R6"/>
<dbReference type="MEROPS" id="M20.003"/>
<dbReference type="KEGG" id="see:SNSL254_A1328"/>
<dbReference type="HOGENOM" id="CLU_053676_0_0_6"/>
<dbReference type="Proteomes" id="UP000008824">
    <property type="component" value="Chromosome"/>
</dbReference>
<dbReference type="GO" id="GO:0005829">
    <property type="term" value="C:cytosol"/>
    <property type="evidence" value="ECO:0007669"/>
    <property type="project" value="TreeGrafter"/>
</dbReference>
<dbReference type="GO" id="GO:0008237">
    <property type="term" value="F:metallopeptidase activity"/>
    <property type="evidence" value="ECO:0007669"/>
    <property type="project" value="UniProtKB-KW"/>
</dbReference>
<dbReference type="GO" id="GO:0045148">
    <property type="term" value="F:tripeptide aminopeptidase activity"/>
    <property type="evidence" value="ECO:0007669"/>
    <property type="project" value="UniProtKB-UniRule"/>
</dbReference>
<dbReference type="GO" id="GO:0008270">
    <property type="term" value="F:zinc ion binding"/>
    <property type="evidence" value="ECO:0007669"/>
    <property type="project" value="UniProtKB-UniRule"/>
</dbReference>
<dbReference type="GO" id="GO:0043171">
    <property type="term" value="P:peptide catabolic process"/>
    <property type="evidence" value="ECO:0007669"/>
    <property type="project" value="UniProtKB-UniRule"/>
</dbReference>
<dbReference type="GO" id="GO:0006508">
    <property type="term" value="P:proteolysis"/>
    <property type="evidence" value="ECO:0007669"/>
    <property type="project" value="UniProtKB-UniRule"/>
</dbReference>
<dbReference type="CDD" id="cd03892">
    <property type="entry name" value="M20_peptT"/>
    <property type="match status" value="1"/>
</dbReference>
<dbReference type="FunFam" id="3.30.70.360:FF:000002">
    <property type="entry name" value="Peptidase T"/>
    <property type="match status" value="1"/>
</dbReference>
<dbReference type="Gene3D" id="3.30.70.360">
    <property type="match status" value="1"/>
</dbReference>
<dbReference type="Gene3D" id="3.40.630.10">
    <property type="entry name" value="Zn peptidases"/>
    <property type="match status" value="1"/>
</dbReference>
<dbReference type="HAMAP" id="MF_00550">
    <property type="entry name" value="Aminopeptidase_M20"/>
    <property type="match status" value="1"/>
</dbReference>
<dbReference type="InterPro" id="IPR001261">
    <property type="entry name" value="ArgE/DapE_CS"/>
</dbReference>
<dbReference type="InterPro" id="IPR036264">
    <property type="entry name" value="Bact_exopeptidase_dim_dom"/>
</dbReference>
<dbReference type="InterPro" id="IPR002933">
    <property type="entry name" value="Peptidase_M20"/>
</dbReference>
<dbReference type="InterPro" id="IPR011650">
    <property type="entry name" value="Peptidase_M20_dimer"/>
</dbReference>
<dbReference type="InterPro" id="IPR010161">
    <property type="entry name" value="Peptidase_M20B"/>
</dbReference>
<dbReference type="NCBIfam" id="TIGR01882">
    <property type="entry name" value="peptidase-T"/>
    <property type="match status" value="1"/>
</dbReference>
<dbReference type="NCBIfam" id="NF003976">
    <property type="entry name" value="PRK05469.1"/>
    <property type="match status" value="1"/>
</dbReference>
<dbReference type="NCBIfam" id="NF009920">
    <property type="entry name" value="PRK13381.1"/>
    <property type="match status" value="1"/>
</dbReference>
<dbReference type="PANTHER" id="PTHR42994">
    <property type="entry name" value="PEPTIDASE T"/>
    <property type="match status" value="1"/>
</dbReference>
<dbReference type="PANTHER" id="PTHR42994:SF1">
    <property type="entry name" value="PEPTIDASE T"/>
    <property type="match status" value="1"/>
</dbReference>
<dbReference type="Pfam" id="PF07687">
    <property type="entry name" value="M20_dimer"/>
    <property type="match status" value="1"/>
</dbReference>
<dbReference type="Pfam" id="PF01546">
    <property type="entry name" value="Peptidase_M20"/>
    <property type="match status" value="1"/>
</dbReference>
<dbReference type="PIRSF" id="PIRSF037215">
    <property type="entry name" value="Peptidase_M20B"/>
    <property type="match status" value="1"/>
</dbReference>
<dbReference type="SUPFAM" id="SSF55031">
    <property type="entry name" value="Bacterial exopeptidase dimerisation domain"/>
    <property type="match status" value="1"/>
</dbReference>
<dbReference type="SUPFAM" id="SSF53187">
    <property type="entry name" value="Zn-dependent exopeptidases"/>
    <property type="match status" value="1"/>
</dbReference>
<dbReference type="PROSITE" id="PS00758">
    <property type="entry name" value="ARGE_DAPE_CPG2_1"/>
    <property type="match status" value="1"/>
</dbReference>
<dbReference type="PROSITE" id="PS00759">
    <property type="entry name" value="ARGE_DAPE_CPG2_2"/>
    <property type="match status" value="1"/>
</dbReference>
<organism>
    <name type="scientific">Salmonella newport (strain SL254)</name>
    <dbReference type="NCBI Taxonomy" id="423368"/>
    <lineage>
        <taxon>Bacteria</taxon>
        <taxon>Pseudomonadati</taxon>
        <taxon>Pseudomonadota</taxon>
        <taxon>Gammaproteobacteria</taxon>
        <taxon>Enterobacterales</taxon>
        <taxon>Enterobacteriaceae</taxon>
        <taxon>Salmonella</taxon>
    </lineage>
</organism>
<proteinExistence type="inferred from homology"/>
<name>PEPT_SALNS</name>
<sequence>MDKLLERFLHYVSLDTQSKSGVRQVPSTEGQWKLLRLLKQQLEEMGLVNITLSEKGTLMATLPANVEGDIPAIGFISHVDTSPDFSGKNVNPQIVENYRGGDIALGIGDEVLSPVMFPVLHQLLGQTLITTDGKTLLGADDKAGVAEIMTALAVLKGNPIPHGDIKVAFTPDEEVGKGAKHFDVEAFGAQWAYTVDGGGVGELEFENFNAASVNIKIVGNNVHPGTAKGVMVNALSLAARIHAEVPADEAPETTEGYEGFYHLASMKGTVDRAEMHYIIRDFDRKQFEARKRKMMEIAKKVGKGLHPDCYIELVIEDSYYNMREKVVEHPHILDIAQQAMRDCHITPEMKPIRGGTDGAQLSFMGLPCPNLFTGGYNYHGKHEFVTLEGMEKAVQVIVRIAELTAKRGQ</sequence>
<protein>
    <recommendedName>
        <fullName evidence="1">Peptidase T</fullName>
        <ecNumber evidence="1">3.4.11.4</ecNumber>
    </recommendedName>
    <alternativeName>
        <fullName evidence="1">Aminotripeptidase</fullName>
        <shortName evidence="1">Tripeptidase</shortName>
    </alternativeName>
    <alternativeName>
        <fullName evidence="1">Tripeptide aminopeptidase</fullName>
    </alternativeName>
</protein>
<gene>
    <name evidence="1" type="primary">pepT</name>
    <name type="ordered locus">SNSL254_A1328</name>
</gene>
<reference key="1">
    <citation type="journal article" date="2011" name="J. Bacteriol.">
        <title>Comparative genomics of 28 Salmonella enterica isolates: evidence for CRISPR-mediated adaptive sublineage evolution.</title>
        <authorList>
            <person name="Fricke W.F."/>
            <person name="Mammel M.K."/>
            <person name="McDermott P.F."/>
            <person name="Tartera C."/>
            <person name="White D.G."/>
            <person name="Leclerc J.E."/>
            <person name="Ravel J."/>
            <person name="Cebula T.A."/>
        </authorList>
    </citation>
    <scope>NUCLEOTIDE SEQUENCE [LARGE SCALE GENOMIC DNA]</scope>
    <source>
        <strain>SL254</strain>
    </source>
</reference>
<comment type="function">
    <text evidence="1">Cleaves the N-terminal amino acid of tripeptides.</text>
</comment>
<comment type="catalytic activity">
    <reaction evidence="1">
        <text>Release of the N-terminal residue from a tripeptide.</text>
        <dbReference type="EC" id="3.4.11.4"/>
    </reaction>
</comment>
<comment type="cofactor">
    <cofactor evidence="1">
        <name>Zn(2+)</name>
        <dbReference type="ChEBI" id="CHEBI:29105"/>
    </cofactor>
    <text evidence="1">Binds 2 Zn(2+) ions per subunit.</text>
</comment>
<comment type="subcellular location">
    <subcellularLocation>
        <location evidence="1">Cytoplasm</location>
    </subcellularLocation>
</comment>
<comment type="similarity">
    <text evidence="1">Belongs to the peptidase M20B family.</text>
</comment>
<keyword id="KW-0031">Aminopeptidase</keyword>
<keyword id="KW-0963">Cytoplasm</keyword>
<keyword id="KW-0378">Hydrolase</keyword>
<keyword id="KW-0479">Metal-binding</keyword>
<keyword id="KW-0482">Metalloprotease</keyword>
<keyword id="KW-0645">Protease</keyword>
<keyword id="KW-0862">Zinc</keyword>
<feature type="chain" id="PRO_1000129043" description="Peptidase T">
    <location>
        <begin position="1"/>
        <end position="409"/>
    </location>
</feature>
<feature type="active site" evidence="1">
    <location>
        <position position="80"/>
    </location>
</feature>
<feature type="active site" description="Proton acceptor" evidence="1">
    <location>
        <position position="173"/>
    </location>
</feature>
<feature type="binding site" evidence="1">
    <location>
        <position position="78"/>
    </location>
    <ligand>
        <name>Zn(2+)</name>
        <dbReference type="ChEBI" id="CHEBI:29105"/>
        <label>1</label>
    </ligand>
</feature>
<feature type="binding site" evidence="1">
    <location>
        <position position="140"/>
    </location>
    <ligand>
        <name>Zn(2+)</name>
        <dbReference type="ChEBI" id="CHEBI:29105"/>
        <label>1</label>
    </ligand>
</feature>
<feature type="binding site" evidence="1">
    <location>
        <position position="140"/>
    </location>
    <ligand>
        <name>Zn(2+)</name>
        <dbReference type="ChEBI" id="CHEBI:29105"/>
        <label>2</label>
    </ligand>
</feature>
<feature type="binding site" evidence="1">
    <location>
        <position position="174"/>
    </location>
    <ligand>
        <name>Zn(2+)</name>
        <dbReference type="ChEBI" id="CHEBI:29105"/>
        <label>2</label>
    </ligand>
</feature>
<feature type="binding site" evidence="1">
    <location>
        <position position="196"/>
    </location>
    <ligand>
        <name>Zn(2+)</name>
        <dbReference type="ChEBI" id="CHEBI:29105"/>
        <label>1</label>
    </ligand>
</feature>
<feature type="binding site" evidence="1">
    <location>
        <position position="379"/>
    </location>
    <ligand>
        <name>Zn(2+)</name>
        <dbReference type="ChEBI" id="CHEBI:29105"/>
        <label>2</label>
    </ligand>
</feature>